<organism>
    <name type="scientific">Aplodontia rufa</name>
    <name type="common">Mountain beaver</name>
    <dbReference type="NCBI Taxonomy" id="51342"/>
    <lineage>
        <taxon>Eukaryota</taxon>
        <taxon>Metazoa</taxon>
        <taxon>Chordata</taxon>
        <taxon>Craniata</taxon>
        <taxon>Vertebrata</taxon>
        <taxon>Euteleostomi</taxon>
        <taxon>Mammalia</taxon>
        <taxon>Eutheria</taxon>
        <taxon>Euarchontoglires</taxon>
        <taxon>Glires</taxon>
        <taxon>Rodentia</taxon>
        <taxon>Sciuromorpha</taxon>
        <taxon>Aplodontiidae</taxon>
        <taxon>Aplodontia</taxon>
    </lineage>
</organism>
<accession>Q8WB05</accession>
<geneLocation type="mitochondrion"/>
<feature type="chain" id="PRO_0000257871" description="Cytochrome b">
    <location>
        <begin position="1"/>
        <end position="379"/>
    </location>
</feature>
<feature type="transmembrane region" description="Helical" evidence="2">
    <location>
        <begin position="33"/>
        <end position="53"/>
    </location>
</feature>
<feature type="transmembrane region" description="Helical" evidence="2">
    <location>
        <begin position="77"/>
        <end position="98"/>
    </location>
</feature>
<feature type="transmembrane region" description="Helical" evidence="2">
    <location>
        <begin position="113"/>
        <end position="133"/>
    </location>
</feature>
<feature type="transmembrane region" description="Helical" evidence="2">
    <location>
        <begin position="178"/>
        <end position="198"/>
    </location>
</feature>
<feature type="transmembrane region" description="Helical" evidence="2">
    <location>
        <begin position="226"/>
        <end position="246"/>
    </location>
</feature>
<feature type="transmembrane region" description="Helical" evidence="2">
    <location>
        <begin position="288"/>
        <end position="308"/>
    </location>
</feature>
<feature type="transmembrane region" description="Helical" evidence="2">
    <location>
        <begin position="320"/>
        <end position="340"/>
    </location>
</feature>
<feature type="transmembrane region" description="Helical" evidence="2">
    <location>
        <begin position="347"/>
        <end position="367"/>
    </location>
</feature>
<feature type="binding site" description="axial binding residue" evidence="2">
    <location>
        <position position="83"/>
    </location>
    <ligand>
        <name>heme b</name>
        <dbReference type="ChEBI" id="CHEBI:60344"/>
        <label>b562</label>
    </ligand>
    <ligandPart>
        <name>Fe</name>
        <dbReference type="ChEBI" id="CHEBI:18248"/>
    </ligandPart>
</feature>
<feature type="binding site" description="axial binding residue" evidence="2">
    <location>
        <position position="97"/>
    </location>
    <ligand>
        <name>heme b</name>
        <dbReference type="ChEBI" id="CHEBI:60344"/>
        <label>b566</label>
    </ligand>
    <ligandPart>
        <name>Fe</name>
        <dbReference type="ChEBI" id="CHEBI:18248"/>
    </ligandPart>
</feature>
<feature type="binding site" description="axial binding residue" evidence="2">
    <location>
        <position position="182"/>
    </location>
    <ligand>
        <name>heme b</name>
        <dbReference type="ChEBI" id="CHEBI:60344"/>
        <label>b562</label>
    </ligand>
    <ligandPart>
        <name>Fe</name>
        <dbReference type="ChEBI" id="CHEBI:18248"/>
    </ligandPart>
</feature>
<feature type="binding site" description="axial binding residue" evidence="2">
    <location>
        <position position="196"/>
    </location>
    <ligand>
        <name>heme b</name>
        <dbReference type="ChEBI" id="CHEBI:60344"/>
        <label>b566</label>
    </ligand>
    <ligandPart>
        <name>Fe</name>
        <dbReference type="ChEBI" id="CHEBI:18248"/>
    </ligandPart>
</feature>
<feature type="binding site" evidence="2">
    <location>
        <position position="201"/>
    </location>
    <ligand>
        <name>a ubiquinone</name>
        <dbReference type="ChEBI" id="CHEBI:16389"/>
    </ligand>
</feature>
<evidence type="ECO:0000250" key="1"/>
<evidence type="ECO:0000250" key="2">
    <source>
        <dbReference type="UniProtKB" id="P00157"/>
    </source>
</evidence>
<evidence type="ECO:0000255" key="3">
    <source>
        <dbReference type="PROSITE-ProRule" id="PRU00967"/>
    </source>
</evidence>
<evidence type="ECO:0000255" key="4">
    <source>
        <dbReference type="PROSITE-ProRule" id="PRU00968"/>
    </source>
</evidence>
<proteinExistence type="inferred from homology"/>
<gene>
    <name type="primary">MT-CYB</name>
    <name type="synonym">COB</name>
    <name type="synonym">CYTB</name>
    <name type="synonym">MTCYB</name>
</gene>
<dbReference type="EMBL" id="AJ389528">
    <property type="protein sequence ID" value="CAC80523.1"/>
    <property type="molecule type" value="Genomic_DNA"/>
</dbReference>
<dbReference type="SMR" id="Q8WB05"/>
<dbReference type="GO" id="GO:0005743">
    <property type="term" value="C:mitochondrial inner membrane"/>
    <property type="evidence" value="ECO:0007669"/>
    <property type="project" value="UniProtKB-SubCell"/>
</dbReference>
<dbReference type="GO" id="GO:0045275">
    <property type="term" value="C:respiratory chain complex III"/>
    <property type="evidence" value="ECO:0007669"/>
    <property type="project" value="InterPro"/>
</dbReference>
<dbReference type="GO" id="GO:0046872">
    <property type="term" value="F:metal ion binding"/>
    <property type="evidence" value="ECO:0007669"/>
    <property type="project" value="UniProtKB-KW"/>
</dbReference>
<dbReference type="GO" id="GO:0008121">
    <property type="term" value="F:ubiquinol-cytochrome-c reductase activity"/>
    <property type="evidence" value="ECO:0007669"/>
    <property type="project" value="InterPro"/>
</dbReference>
<dbReference type="GO" id="GO:0006122">
    <property type="term" value="P:mitochondrial electron transport, ubiquinol to cytochrome c"/>
    <property type="evidence" value="ECO:0007669"/>
    <property type="project" value="TreeGrafter"/>
</dbReference>
<dbReference type="CDD" id="cd00290">
    <property type="entry name" value="cytochrome_b_C"/>
    <property type="match status" value="1"/>
</dbReference>
<dbReference type="CDD" id="cd00284">
    <property type="entry name" value="Cytochrome_b_N"/>
    <property type="match status" value="1"/>
</dbReference>
<dbReference type="FunFam" id="1.20.810.10:FF:000002">
    <property type="entry name" value="Cytochrome b"/>
    <property type="match status" value="1"/>
</dbReference>
<dbReference type="Gene3D" id="1.20.810.10">
    <property type="entry name" value="Cytochrome Bc1 Complex, Chain C"/>
    <property type="match status" value="1"/>
</dbReference>
<dbReference type="InterPro" id="IPR005798">
    <property type="entry name" value="Cyt_b/b6_C"/>
</dbReference>
<dbReference type="InterPro" id="IPR036150">
    <property type="entry name" value="Cyt_b/b6_C_sf"/>
</dbReference>
<dbReference type="InterPro" id="IPR005797">
    <property type="entry name" value="Cyt_b/b6_N"/>
</dbReference>
<dbReference type="InterPro" id="IPR027387">
    <property type="entry name" value="Cytb/b6-like_sf"/>
</dbReference>
<dbReference type="InterPro" id="IPR030689">
    <property type="entry name" value="Cytochrome_b"/>
</dbReference>
<dbReference type="InterPro" id="IPR048260">
    <property type="entry name" value="Cytochrome_b_C_euk/bac"/>
</dbReference>
<dbReference type="InterPro" id="IPR048259">
    <property type="entry name" value="Cytochrome_b_N_euk/bac"/>
</dbReference>
<dbReference type="InterPro" id="IPR016174">
    <property type="entry name" value="Di-haem_cyt_TM"/>
</dbReference>
<dbReference type="PANTHER" id="PTHR19271">
    <property type="entry name" value="CYTOCHROME B"/>
    <property type="match status" value="1"/>
</dbReference>
<dbReference type="PANTHER" id="PTHR19271:SF16">
    <property type="entry name" value="CYTOCHROME B"/>
    <property type="match status" value="1"/>
</dbReference>
<dbReference type="Pfam" id="PF00032">
    <property type="entry name" value="Cytochrom_B_C"/>
    <property type="match status" value="1"/>
</dbReference>
<dbReference type="Pfam" id="PF00033">
    <property type="entry name" value="Cytochrome_B"/>
    <property type="match status" value="1"/>
</dbReference>
<dbReference type="PIRSF" id="PIRSF038885">
    <property type="entry name" value="COB"/>
    <property type="match status" value="1"/>
</dbReference>
<dbReference type="SUPFAM" id="SSF81648">
    <property type="entry name" value="a domain/subunit of cytochrome bc1 complex (Ubiquinol-cytochrome c reductase)"/>
    <property type="match status" value="1"/>
</dbReference>
<dbReference type="SUPFAM" id="SSF81342">
    <property type="entry name" value="Transmembrane di-heme cytochromes"/>
    <property type="match status" value="1"/>
</dbReference>
<dbReference type="PROSITE" id="PS51003">
    <property type="entry name" value="CYTB_CTER"/>
    <property type="match status" value="1"/>
</dbReference>
<dbReference type="PROSITE" id="PS51002">
    <property type="entry name" value="CYTB_NTER"/>
    <property type="match status" value="1"/>
</dbReference>
<sequence length="379" mass="42953">MTNIRKTHPLMKIINHSFIDLPTPSNISAWWNFGSLLGFCLIVQIMTGLFLAMHYTSDTTTAFSSVAHICRDVNYGWLIRYMHANGASLFFICLYLHVGRGMYYGSYLSYETWNIGILLLLAVMATAFMGYVLPWGQMSFWGATVITNLLSAIPYIGASLVEWIWGGFSVDKATLTRFFAFHFVLPFIIMALAMIHLLFLHESGSNNPSGLMSDSDKVPFHPYYTIKDILGLILLTLFFMILVLFSPDILGDPDNYTPANPLITPPHIKPEWYFLFAYAILRSIPNKLGGVLALVFSILILVLLPLLHMSKQRSMAFRPLTQCLFWILAADLLTLTWIGGQPVEYPFIAIGQLASILYFLLILFMMPLTSLMEDKLLKW</sequence>
<reference key="1">
    <citation type="journal article" date="2002" name="Mol. Phylogenet. Evol.">
        <title>Molecular systematics of sciurognathi (rodentia): the mitochondrial cytochrome b and 12S rRNA genes support the Anomaluroidea (Pedetidae and Anomaluridae).</title>
        <authorList>
            <person name="Montgelard C."/>
            <person name="Bentz S."/>
            <person name="Tirard C."/>
            <person name="Verneau O."/>
            <person name="Catzeflis F.M."/>
        </authorList>
    </citation>
    <scope>NUCLEOTIDE SEQUENCE [GENOMIC DNA]</scope>
</reference>
<keyword id="KW-0249">Electron transport</keyword>
<keyword id="KW-0349">Heme</keyword>
<keyword id="KW-0408">Iron</keyword>
<keyword id="KW-0472">Membrane</keyword>
<keyword id="KW-0479">Metal-binding</keyword>
<keyword id="KW-0496">Mitochondrion</keyword>
<keyword id="KW-0999">Mitochondrion inner membrane</keyword>
<keyword id="KW-0679">Respiratory chain</keyword>
<keyword id="KW-0812">Transmembrane</keyword>
<keyword id="KW-1133">Transmembrane helix</keyword>
<keyword id="KW-0813">Transport</keyword>
<keyword id="KW-0830">Ubiquinone</keyword>
<comment type="function">
    <text evidence="2">Component of the ubiquinol-cytochrome c reductase complex (complex III or cytochrome b-c1 complex) that is part of the mitochondrial respiratory chain. The b-c1 complex mediates electron transfer from ubiquinol to cytochrome c. Contributes to the generation of a proton gradient across the mitochondrial membrane that is then used for ATP synthesis.</text>
</comment>
<comment type="cofactor">
    <cofactor evidence="2">
        <name>heme b</name>
        <dbReference type="ChEBI" id="CHEBI:60344"/>
    </cofactor>
    <text evidence="2">Binds 2 heme b groups non-covalently.</text>
</comment>
<comment type="subunit">
    <text evidence="2">The cytochrome bc1 complex contains 11 subunits: 3 respiratory subunits (MT-CYB, CYC1 and UQCRFS1), 2 core proteins (UQCRC1 and UQCRC2) and 6 low-molecular weight proteins (UQCRH/QCR6, UQCRB/QCR7, UQCRQ/QCR8, UQCR10/QCR9, UQCR11/QCR10 and a cleavage product of UQCRFS1). This cytochrome bc1 complex then forms a dimer.</text>
</comment>
<comment type="subcellular location">
    <subcellularLocation>
        <location evidence="2">Mitochondrion inner membrane</location>
        <topology evidence="2">Multi-pass membrane protein</topology>
    </subcellularLocation>
</comment>
<comment type="miscellaneous">
    <text evidence="1">Heme 1 (or BL or b562) is low-potential and absorbs at about 562 nm, and heme 2 (or BH or b566) is high-potential and absorbs at about 566 nm.</text>
</comment>
<comment type="similarity">
    <text evidence="3 4">Belongs to the cytochrome b family.</text>
</comment>
<comment type="caution">
    <text evidence="2">The full-length protein contains only eight transmembrane helices, not nine as predicted by bioinformatics tools.</text>
</comment>
<name>CYB_APLRU</name>
<protein>
    <recommendedName>
        <fullName>Cytochrome b</fullName>
    </recommendedName>
    <alternativeName>
        <fullName>Complex III subunit 3</fullName>
    </alternativeName>
    <alternativeName>
        <fullName>Complex III subunit III</fullName>
    </alternativeName>
    <alternativeName>
        <fullName>Cytochrome b-c1 complex subunit 3</fullName>
    </alternativeName>
    <alternativeName>
        <fullName>Ubiquinol-cytochrome-c reductase complex cytochrome b subunit</fullName>
    </alternativeName>
</protein>